<protein>
    <recommendedName>
        <fullName evidence="1">Nicotinate-nucleotide--dimethylbenzimidazole phosphoribosyltransferase</fullName>
        <shortName evidence="1">NN:DBI PRT</shortName>
        <ecNumber evidence="1">2.4.2.21</ecNumber>
    </recommendedName>
    <alternativeName>
        <fullName evidence="1">N(1)-alpha-phosphoribosyltransferase</fullName>
    </alternativeName>
</protein>
<sequence length="353" mass="37228">MFKIAPLNNQFDHLIHNKINNKTKPLGALGQLELIALQLVKILSQTIKSDVEFTAFKAEICNPTLVVFAGDHGIAAQGVSIAPSEVTAQMVANFVAGGAAINIFCQQLGWQLEVVDCGILEKSPASKVHDCRLGNITAPLNLHMAMSTAQVKQGFSNAKSLVLQLKQQGCNTLAMGEMGIGNTTSAAAIMAAILNLPVTQCVGRGTGVSDELIARKINVVEQALQLHKAHLADPIALLAAVGGFEIVHITGAMLAAAEQGMAVIVDGFICSAAAMVAIKINPIVKEYLIFAHCSNEQGHQQMLSKLEVKPLLQLDLRLGEGTGAALSLPLLQAALGFYNHMASFADAGVEQVV</sequence>
<proteinExistence type="inferred from homology"/>
<keyword id="KW-0169">Cobalamin biosynthesis</keyword>
<keyword id="KW-0328">Glycosyltransferase</keyword>
<keyword id="KW-1185">Reference proteome</keyword>
<keyword id="KW-0808">Transferase</keyword>
<feature type="chain" id="PRO_1000021615" description="Nicotinate-nucleotide--dimethylbenzimidazole phosphoribosyltransferase">
    <location>
        <begin position="1"/>
        <end position="353"/>
    </location>
</feature>
<feature type="active site" description="Proton acceptor" evidence="1">
    <location>
        <position position="320"/>
    </location>
</feature>
<name>COBT_PSET1</name>
<evidence type="ECO:0000255" key="1">
    <source>
        <dbReference type="HAMAP-Rule" id="MF_00230"/>
    </source>
</evidence>
<reference key="1">
    <citation type="journal article" date="2005" name="Genome Res.">
        <title>Coping with cold: the genome of the versatile marine Antarctica bacterium Pseudoalteromonas haloplanktis TAC125.</title>
        <authorList>
            <person name="Medigue C."/>
            <person name="Krin E."/>
            <person name="Pascal G."/>
            <person name="Barbe V."/>
            <person name="Bernsel A."/>
            <person name="Bertin P.N."/>
            <person name="Cheung F."/>
            <person name="Cruveiller S."/>
            <person name="D'Amico S."/>
            <person name="Duilio A."/>
            <person name="Fang G."/>
            <person name="Feller G."/>
            <person name="Ho C."/>
            <person name="Mangenot S."/>
            <person name="Marino G."/>
            <person name="Nilsson J."/>
            <person name="Parrilli E."/>
            <person name="Rocha E.P.C."/>
            <person name="Rouy Z."/>
            <person name="Sekowska A."/>
            <person name="Tutino M.L."/>
            <person name="Vallenet D."/>
            <person name="von Heijne G."/>
            <person name="Danchin A."/>
        </authorList>
    </citation>
    <scope>NUCLEOTIDE SEQUENCE [LARGE SCALE GENOMIC DNA]</scope>
    <source>
        <strain>TAC 125</strain>
    </source>
</reference>
<comment type="function">
    <text evidence="1">Catalyzes the synthesis of alpha-ribazole-5'-phosphate from nicotinate mononucleotide (NAMN) and 5,6-dimethylbenzimidazole (DMB).</text>
</comment>
<comment type="catalytic activity">
    <reaction evidence="1">
        <text>5,6-dimethylbenzimidazole + nicotinate beta-D-ribonucleotide = alpha-ribazole 5'-phosphate + nicotinate + H(+)</text>
        <dbReference type="Rhea" id="RHEA:11196"/>
        <dbReference type="ChEBI" id="CHEBI:15378"/>
        <dbReference type="ChEBI" id="CHEBI:15890"/>
        <dbReference type="ChEBI" id="CHEBI:32544"/>
        <dbReference type="ChEBI" id="CHEBI:57502"/>
        <dbReference type="ChEBI" id="CHEBI:57918"/>
        <dbReference type="EC" id="2.4.2.21"/>
    </reaction>
</comment>
<comment type="pathway">
    <text evidence="1">Nucleoside biosynthesis; alpha-ribazole biosynthesis; alpha-ribazole from 5,6-dimethylbenzimidazole: step 1/2.</text>
</comment>
<comment type="similarity">
    <text evidence="1">Belongs to the CobT family.</text>
</comment>
<dbReference type="EC" id="2.4.2.21" evidence="1"/>
<dbReference type="EMBL" id="CR954246">
    <property type="protein sequence ID" value="CAI88033.1"/>
    <property type="molecule type" value="Genomic_DNA"/>
</dbReference>
<dbReference type="SMR" id="Q3IK32"/>
<dbReference type="STRING" id="326442.PSHAa2999"/>
<dbReference type="KEGG" id="pha:PSHAa2999"/>
<dbReference type="PATRIC" id="fig|326442.8.peg.2894"/>
<dbReference type="eggNOG" id="COG2038">
    <property type="taxonomic scope" value="Bacteria"/>
</dbReference>
<dbReference type="HOGENOM" id="CLU_002982_0_0_6"/>
<dbReference type="BioCyc" id="PHAL326442:PSHA_RS14725-MONOMER"/>
<dbReference type="UniPathway" id="UPA00061">
    <property type="reaction ID" value="UER00516"/>
</dbReference>
<dbReference type="Proteomes" id="UP000006843">
    <property type="component" value="Chromosome I"/>
</dbReference>
<dbReference type="GO" id="GO:0008939">
    <property type="term" value="F:nicotinate-nucleotide-dimethylbenzimidazole phosphoribosyltransferase activity"/>
    <property type="evidence" value="ECO:0007669"/>
    <property type="project" value="UniProtKB-UniRule"/>
</dbReference>
<dbReference type="GO" id="GO:0009236">
    <property type="term" value="P:cobalamin biosynthetic process"/>
    <property type="evidence" value="ECO:0007669"/>
    <property type="project" value="UniProtKB-KW"/>
</dbReference>
<dbReference type="CDD" id="cd02439">
    <property type="entry name" value="DMB-PRT_CobT"/>
    <property type="match status" value="1"/>
</dbReference>
<dbReference type="FunFam" id="3.40.50.10210:FF:000001">
    <property type="entry name" value="Nicotinate-nucleotide--dimethylbenzimidazole phosphoribosyltransferase"/>
    <property type="match status" value="1"/>
</dbReference>
<dbReference type="Gene3D" id="1.10.1610.10">
    <property type="match status" value="1"/>
</dbReference>
<dbReference type="Gene3D" id="3.40.50.10210">
    <property type="match status" value="1"/>
</dbReference>
<dbReference type="HAMAP" id="MF_00230">
    <property type="entry name" value="CobT"/>
    <property type="match status" value="1"/>
</dbReference>
<dbReference type="InterPro" id="IPR003200">
    <property type="entry name" value="Nict_dMeBzImd_PRibTrfase"/>
</dbReference>
<dbReference type="InterPro" id="IPR017846">
    <property type="entry name" value="Nict_dMeBzImd_PRibTrfase_bact"/>
</dbReference>
<dbReference type="InterPro" id="IPR023195">
    <property type="entry name" value="Nict_dMeBzImd_PRibTrfase_N"/>
</dbReference>
<dbReference type="InterPro" id="IPR036087">
    <property type="entry name" value="Nict_dMeBzImd_PRibTrfase_sf"/>
</dbReference>
<dbReference type="NCBIfam" id="TIGR03160">
    <property type="entry name" value="cobT_DBIPRT"/>
    <property type="match status" value="1"/>
</dbReference>
<dbReference type="NCBIfam" id="NF000996">
    <property type="entry name" value="PRK00105.1"/>
    <property type="match status" value="1"/>
</dbReference>
<dbReference type="PANTHER" id="PTHR43463">
    <property type="entry name" value="NICOTINATE-NUCLEOTIDE--DIMETHYLBENZIMIDAZOLE PHOSPHORIBOSYLTRANSFERASE"/>
    <property type="match status" value="1"/>
</dbReference>
<dbReference type="PANTHER" id="PTHR43463:SF1">
    <property type="entry name" value="NICOTINATE-NUCLEOTIDE--DIMETHYLBENZIMIDAZOLE PHOSPHORIBOSYLTRANSFERASE"/>
    <property type="match status" value="1"/>
</dbReference>
<dbReference type="Pfam" id="PF02277">
    <property type="entry name" value="DBI_PRT"/>
    <property type="match status" value="1"/>
</dbReference>
<dbReference type="SUPFAM" id="SSF52733">
    <property type="entry name" value="Nicotinate mononucleotide:5,6-dimethylbenzimidazole phosphoribosyltransferase (CobT)"/>
    <property type="match status" value="1"/>
</dbReference>
<organism>
    <name type="scientific">Pseudoalteromonas translucida (strain TAC 125)</name>
    <dbReference type="NCBI Taxonomy" id="326442"/>
    <lineage>
        <taxon>Bacteria</taxon>
        <taxon>Pseudomonadati</taxon>
        <taxon>Pseudomonadota</taxon>
        <taxon>Gammaproteobacteria</taxon>
        <taxon>Alteromonadales</taxon>
        <taxon>Pseudoalteromonadaceae</taxon>
        <taxon>Pseudoalteromonas</taxon>
    </lineage>
</organism>
<gene>
    <name evidence="1" type="primary">cobT</name>
    <name type="ordered locus">PSHAa2999</name>
</gene>
<accession>Q3IK32</accession>